<evidence type="ECO:0000250" key="1"/>
<evidence type="ECO:0000255" key="2">
    <source>
        <dbReference type="PROSITE-ProRule" id="PRU00035"/>
    </source>
</evidence>
<evidence type="ECO:0000255" key="3">
    <source>
        <dbReference type="PROSITE-ProRule" id="PRU00370"/>
    </source>
</evidence>
<evidence type="ECO:0000256" key="4">
    <source>
        <dbReference type="SAM" id="MobiDB-lite"/>
    </source>
</evidence>
<evidence type="ECO:0000269" key="5">
    <source>
    </source>
</evidence>
<evidence type="ECO:0000269" key="6">
    <source>
    </source>
</evidence>
<evidence type="ECO:0000269" key="7">
    <source>
    </source>
</evidence>
<evidence type="ECO:0000305" key="8"/>
<protein>
    <recommendedName>
        <fullName>Chromatin structure-remodeling complex subunit rsc1</fullName>
    </recommendedName>
    <alternativeName>
        <fullName>RSC complex subunit rsc1</fullName>
    </alternativeName>
    <alternativeName>
        <fullName>Remodel the structure of chromatin complex subunit 1</fullName>
    </alternativeName>
</protein>
<organism>
    <name type="scientific">Schizosaccharomyces pombe (strain 972 / ATCC 24843)</name>
    <name type="common">Fission yeast</name>
    <dbReference type="NCBI Taxonomy" id="284812"/>
    <lineage>
        <taxon>Eukaryota</taxon>
        <taxon>Fungi</taxon>
        <taxon>Dikarya</taxon>
        <taxon>Ascomycota</taxon>
        <taxon>Taphrinomycotina</taxon>
        <taxon>Schizosaccharomycetes</taxon>
        <taxon>Schizosaccharomycetales</taxon>
        <taxon>Schizosaccharomycetaceae</taxon>
        <taxon>Schizosaccharomyces</taxon>
    </lineage>
</organism>
<reference key="1">
    <citation type="journal article" date="2002" name="Nature">
        <title>The genome sequence of Schizosaccharomyces pombe.</title>
        <authorList>
            <person name="Wood V."/>
            <person name="Gwilliam R."/>
            <person name="Rajandream M.A."/>
            <person name="Lyne M.H."/>
            <person name="Lyne R."/>
            <person name="Stewart A."/>
            <person name="Sgouros J.G."/>
            <person name="Peat N."/>
            <person name="Hayles J."/>
            <person name="Baker S.G."/>
            <person name="Basham D."/>
            <person name="Bowman S."/>
            <person name="Brooks K."/>
            <person name="Brown D."/>
            <person name="Brown S."/>
            <person name="Chillingworth T."/>
            <person name="Churcher C.M."/>
            <person name="Collins M."/>
            <person name="Connor R."/>
            <person name="Cronin A."/>
            <person name="Davis P."/>
            <person name="Feltwell T."/>
            <person name="Fraser A."/>
            <person name="Gentles S."/>
            <person name="Goble A."/>
            <person name="Hamlin N."/>
            <person name="Harris D.E."/>
            <person name="Hidalgo J."/>
            <person name="Hodgson G."/>
            <person name="Holroyd S."/>
            <person name="Hornsby T."/>
            <person name="Howarth S."/>
            <person name="Huckle E.J."/>
            <person name="Hunt S."/>
            <person name="Jagels K."/>
            <person name="James K.D."/>
            <person name="Jones L."/>
            <person name="Jones M."/>
            <person name="Leather S."/>
            <person name="McDonald S."/>
            <person name="McLean J."/>
            <person name="Mooney P."/>
            <person name="Moule S."/>
            <person name="Mungall K.L."/>
            <person name="Murphy L.D."/>
            <person name="Niblett D."/>
            <person name="Odell C."/>
            <person name="Oliver K."/>
            <person name="O'Neil S."/>
            <person name="Pearson D."/>
            <person name="Quail M.A."/>
            <person name="Rabbinowitsch E."/>
            <person name="Rutherford K.M."/>
            <person name="Rutter S."/>
            <person name="Saunders D."/>
            <person name="Seeger K."/>
            <person name="Sharp S."/>
            <person name="Skelton J."/>
            <person name="Simmonds M.N."/>
            <person name="Squares R."/>
            <person name="Squares S."/>
            <person name="Stevens K."/>
            <person name="Taylor K."/>
            <person name="Taylor R.G."/>
            <person name="Tivey A."/>
            <person name="Walsh S.V."/>
            <person name="Warren T."/>
            <person name="Whitehead S."/>
            <person name="Woodward J.R."/>
            <person name="Volckaert G."/>
            <person name="Aert R."/>
            <person name="Robben J."/>
            <person name="Grymonprez B."/>
            <person name="Weltjens I."/>
            <person name="Vanstreels E."/>
            <person name="Rieger M."/>
            <person name="Schaefer M."/>
            <person name="Mueller-Auer S."/>
            <person name="Gabel C."/>
            <person name="Fuchs M."/>
            <person name="Duesterhoeft A."/>
            <person name="Fritzc C."/>
            <person name="Holzer E."/>
            <person name="Moestl D."/>
            <person name="Hilbert H."/>
            <person name="Borzym K."/>
            <person name="Langer I."/>
            <person name="Beck A."/>
            <person name="Lehrach H."/>
            <person name="Reinhardt R."/>
            <person name="Pohl T.M."/>
            <person name="Eger P."/>
            <person name="Zimmermann W."/>
            <person name="Wedler H."/>
            <person name="Wambutt R."/>
            <person name="Purnelle B."/>
            <person name="Goffeau A."/>
            <person name="Cadieu E."/>
            <person name="Dreano S."/>
            <person name="Gloux S."/>
            <person name="Lelaure V."/>
            <person name="Mottier S."/>
            <person name="Galibert F."/>
            <person name="Aves S.J."/>
            <person name="Xiang Z."/>
            <person name="Hunt C."/>
            <person name="Moore K."/>
            <person name="Hurst S.M."/>
            <person name="Lucas M."/>
            <person name="Rochet M."/>
            <person name="Gaillardin C."/>
            <person name="Tallada V.A."/>
            <person name="Garzon A."/>
            <person name="Thode G."/>
            <person name="Daga R.R."/>
            <person name="Cruzado L."/>
            <person name="Jimenez J."/>
            <person name="Sanchez M."/>
            <person name="del Rey F."/>
            <person name="Benito J."/>
            <person name="Dominguez A."/>
            <person name="Revuelta J.L."/>
            <person name="Moreno S."/>
            <person name="Armstrong J."/>
            <person name="Forsburg S.L."/>
            <person name="Cerutti L."/>
            <person name="Lowe T."/>
            <person name="McCombie W.R."/>
            <person name="Paulsen I."/>
            <person name="Potashkin J."/>
            <person name="Shpakovski G.V."/>
            <person name="Ussery D."/>
            <person name="Barrell B.G."/>
            <person name="Nurse P."/>
        </authorList>
    </citation>
    <scope>NUCLEOTIDE SEQUENCE [LARGE SCALE GENOMIC DNA]</scope>
    <source>
        <strain>972 / ATCC 24843</strain>
    </source>
</reference>
<reference key="2">
    <citation type="journal article" date="2006" name="Nat. Biotechnol.">
        <title>ORFeome cloning and global analysis of protein localization in the fission yeast Schizosaccharomyces pombe.</title>
        <authorList>
            <person name="Matsuyama A."/>
            <person name="Arai R."/>
            <person name="Yashiroda Y."/>
            <person name="Shirai A."/>
            <person name="Kamata A."/>
            <person name="Sekido S."/>
            <person name="Kobayashi Y."/>
            <person name="Hashimoto A."/>
            <person name="Hamamoto M."/>
            <person name="Hiraoka Y."/>
            <person name="Horinouchi S."/>
            <person name="Yoshida M."/>
        </authorList>
    </citation>
    <scope>SUBCELLULAR LOCATION [LARGE SCALE ANALYSIS]</scope>
</reference>
<reference key="3">
    <citation type="journal article" date="2008" name="J. Proteome Res.">
        <title>Phosphoproteome analysis of fission yeast.</title>
        <authorList>
            <person name="Wilson-Grady J.T."/>
            <person name="Villen J."/>
            <person name="Gygi S.P."/>
        </authorList>
    </citation>
    <scope>PHOSPHORYLATION [LARGE SCALE ANALYSIS] AT SER-168; SER-331 AND SER-334</scope>
    <scope>IDENTIFICATION BY MASS SPECTROMETRY</scope>
</reference>
<reference key="4">
    <citation type="journal article" date="2008" name="Nat. Struct. Mol. Biol.">
        <title>Fission yeast SWI/SNF and RSC complexes show compositional and functional differences from budding yeast.</title>
        <authorList>
            <person name="Monahan B.J."/>
            <person name="Villen J."/>
            <person name="Marguerat S."/>
            <person name="Baehler J."/>
            <person name="Gygi S.P."/>
            <person name="Winston F."/>
        </authorList>
    </citation>
    <scope>IDENTIFICATION IN THE RSC COMPLEX</scope>
    <scope>FUNCTION OF THE RSC COMPLEX</scope>
    <scope>IDENTIFICATION BY MASS SPECTROMETRY</scope>
</reference>
<dbReference type="EMBL" id="CU329671">
    <property type="protein sequence ID" value="CAA19283.1"/>
    <property type="molecule type" value="Genomic_DNA"/>
</dbReference>
<dbReference type="PIR" id="T40475">
    <property type="entry name" value="T40475"/>
</dbReference>
<dbReference type="RefSeq" id="NP_596420.1">
    <property type="nucleotide sequence ID" value="NM_001022339.2"/>
</dbReference>
<dbReference type="SMR" id="O74964"/>
<dbReference type="BioGRID" id="277271">
    <property type="interactions" value="107"/>
</dbReference>
<dbReference type="ComplexPortal" id="CPX-6363">
    <property type="entry name" value="RSC chromatin remodelling complex"/>
</dbReference>
<dbReference type="DIP" id="DIP-48389N"/>
<dbReference type="FunCoup" id="O74964">
    <property type="interactions" value="269"/>
</dbReference>
<dbReference type="IntAct" id="O74964">
    <property type="interactions" value="12"/>
</dbReference>
<dbReference type="STRING" id="284812.O74964"/>
<dbReference type="iPTMnet" id="O74964"/>
<dbReference type="PaxDb" id="4896-SPBC4B4.03.1"/>
<dbReference type="EnsemblFungi" id="SPBC4B4.03.1">
    <property type="protein sequence ID" value="SPBC4B4.03.1:pep"/>
    <property type="gene ID" value="SPBC4B4.03"/>
</dbReference>
<dbReference type="GeneID" id="2540749"/>
<dbReference type="KEGG" id="spo:2540749"/>
<dbReference type="PomBase" id="SPBC4B4.03">
    <property type="gene designation" value="rsc1"/>
</dbReference>
<dbReference type="VEuPathDB" id="FungiDB:SPBC4B4.03"/>
<dbReference type="eggNOG" id="KOG1827">
    <property type="taxonomic scope" value="Eukaryota"/>
</dbReference>
<dbReference type="HOGENOM" id="CLU_338353_0_0_1"/>
<dbReference type="InParanoid" id="O74964"/>
<dbReference type="OMA" id="PRMFPEY"/>
<dbReference type="PhylomeDB" id="O74964"/>
<dbReference type="PRO" id="PR:O74964"/>
<dbReference type="Proteomes" id="UP000002485">
    <property type="component" value="Chromosome II"/>
</dbReference>
<dbReference type="GO" id="GO:0000785">
    <property type="term" value="C:chromatin"/>
    <property type="evidence" value="ECO:0000303"/>
    <property type="project" value="ComplexPortal"/>
</dbReference>
<dbReference type="GO" id="GO:0005634">
    <property type="term" value="C:nucleus"/>
    <property type="evidence" value="ECO:0007005"/>
    <property type="project" value="PomBase"/>
</dbReference>
<dbReference type="GO" id="GO:0016586">
    <property type="term" value="C:RSC-type complex"/>
    <property type="evidence" value="ECO:0000314"/>
    <property type="project" value="PomBase"/>
</dbReference>
<dbReference type="GO" id="GO:0003682">
    <property type="term" value="F:chromatin binding"/>
    <property type="evidence" value="ECO:0000318"/>
    <property type="project" value="GO_Central"/>
</dbReference>
<dbReference type="GO" id="GO:0006338">
    <property type="term" value="P:chromatin remodeling"/>
    <property type="evidence" value="ECO:0000318"/>
    <property type="project" value="GO_Central"/>
</dbReference>
<dbReference type="GO" id="GO:0006368">
    <property type="term" value="P:transcription elongation by RNA polymerase II"/>
    <property type="evidence" value="ECO:0000318"/>
    <property type="project" value="GO_Central"/>
</dbReference>
<dbReference type="GO" id="GO:0045815">
    <property type="term" value="P:transcription initiation-coupled chromatin remodeling"/>
    <property type="evidence" value="ECO:0000305"/>
    <property type="project" value="PomBase"/>
</dbReference>
<dbReference type="CDD" id="cd04717">
    <property type="entry name" value="BAH_polybromo"/>
    <property type="match status" value="1"/>
</dbReference>
<dbReference type="CDD" id="cd05522">
    <property type="entry name" value="Bromo_Rsc1_2_II"/>
    <property type="match status" value="1"/>
</dbReference>
<dbReference type="FunFam" id="2.30.30.490:FF:000016">
    <property type="entry name" value="RSC complex member"/>
    <property type="match status" value="1"/>
</dbReference>
<dbReference type="Gene3D" id="2.30.30.490">
    <property type="match status" value="1"/>
</dbReference>
<dbReference type="Gene3D" id="1.20.920.10">
    <property type="entry name" value="Bromodomain-like"/>
    <property type="match status" value="2"/>
</dbReference>
<dbReference type="InterPro" id="IPR001025">
    <property type="entry name" value="BAH_dom"/>
</dbReference>
<dbReference type="InterPro" id="IPR043151">
    <property type="entry name" value="BAH_sf"/>
</dbReference>
<dbReference type="InterPro" id="IPR001487">
    <property type="entry name" value="Bromodomain"/>
</dbReference>
<dbReference type="InterPro" id="IPR036427">
    <property type="entry name" value="Bromodomain-like_sf"/>
</dbReference>
<dbReference type="InterPro" id="IPR018359">
    <property type="entry name" value="Bromodomain_CS"/>
</dbReference>
<dbReference type="InterPro" id="IPR037382">
    <property type="entry name" value="Rsc/polybromo"/>
</dbReference>
<dbReference type="InterPro" id="IPR048047">
    <property type="entry name" value="RSC1/2_bromodom"/>
</dbReference>
<dbReference type="PANTHER" id="PTHR16062:SF21">
    <property type="entry name" value="CHROMATIN STRUCTURE-REMODELING COMPLEX SUBUNIT RSC1-RELATED"/>
    <property type="match status" value="1"/>
</dbReference>
<dbReference type="PANTHER" id="PTHR16062">
    <property type="entry name" value="SWI/SNF-RELATED"/>
    <property type="match status" value="1"/>
</dbReference>
<dbReference type="Pfam" id="PF01426">
    <property type="entry name" value="BAH"/>
    <property type="match status" value="1"/>
</dbReference>
<dbReference type="Pfam" id="PF00439">
    <property type="entry name" value="Bromodomain"/>
    <property type="match status" value="1"/>
</dbReference>
<dbReference type="PRINTS" id="PR00503">
    <property type="entry name" value="BROMODOMAIN"/>
</dbReference>
<dbReference type="SMART" id="SM00439">
    <property type="entry name" value="BAH"/>
    <property type="match status" value="1"/>
</dbReference>
<dbReference type="SMART" id="SM00297">
    <property type="entry name" value="BROMO"/>
    <property type="match status" value="2"/>
</dbReference>
<dbReference type="SUPFAM" id="SSF47370">
    <property type="entry name" value="Bromodomain"/>
    <property type="match status" value="2"/>
</dbReference>
<dbReference type="PROSITE" id="PS51038">
    <property type="entry name" value="BAH"/>
    <property type="match status" value="1"/>
</dbReference>
<dbReference type="PROSITE" id="PS00633">
    <property type="entry name" value="BROMODOMAIN_1"/>
    <property type="match status" value="1"/>
</dbReference>
<dbReference type="PROSITE" id="PS50014">
    <property type="entry name" value="BROMODOMAIN_2"/>
    <property type="match status" value="2"/>
</dbReference>
<comment type="function">
    <text evidence="7">Component of the chromatin structure remodeling complex (RSC), which is involved in transcription regulation and nucleosome positioning. Controls particularly membrane and organelle development genes.</text>
</comment>
<comment type="subunit">
    <text evidence="1">Component of the RSC complex composed of at least arp9, arp42, rsc1, rsc4, rsc7, rsc9, rsc58, sfh1, snf21, ssr1, ssr2, ssr3 and ssr4. The complex interacts with histone and histone variant components of centromeric chromatin (By similarity).</text>
</comment>
<comment type="subcellular location">
    <subcellularLocation>
        <location evidence="5">Nucleus</location>
    </subcellularLocation>
    <text evidence="1">Localizes to centromeric and flanking chromatin.</text>
</comment>
<comment type="similarity">
    <text evidence="8">Belongs to the RSC1 family.</text>
</comment>
<accession>O74964</accession>
<proteinExistence type="evidence at protein level"/>
<sequence length="803" mass="90132">MSSKIRPSADDKKLQRVLYFFLERVRAAKDVSGQLLSPLIDNASVDTASVSPSSNGRPTTLKSIQSKIDEFQYHDFSEFVSDLAYLFINVKALYEGTQTYSFVQALEEFCIQQLRTFQQQGYIPVITWPNTDSPSATTSSPISRNPEYSVSPPNGSKFVKNEDEAYDSDLYVEEEDSDVKGRSMVGRDGRYKSEDLKRRKLQPSSKPLSSLEARAKVIMRQVRRYRDGSGRQLFAPFERLPDPRMFPEYYQAIEQPMALEVIQKKLSKHRYETIEQFVDDFNLMFDNAKSFNDPSSQVYRDADFLKNYLADVLRLEAGKLDSEFFNYETDSRASPQLPKNDIQPAVSIDGTLLNVGDWVLIRNPADSSKPIVSQIYRIWKSDDDINYVTVCWYLRPEQTVHRADAVFYENEVFKTSLYRDHPVSEIVGRCFVMYITRYIRGRPKGIRSTPVFVCESRYNDDTKQFSKIKSWKACMPQEVSGSEYEMILFDRPITLTKVASPLLHLLASKSQGLPSPATTDSNTHMLPSQGSLLPPSSISETKSFSTKASTPLSTDDIATPLSSAPNPPSVMPTYARKTSSHSERSSHSSYHNSSHVPTAAFNSPIMRTSTKSTSPIPARPFYAQSGSLQSLNTTQHSHQISGGHSGRMNVPYAKLSYTSHNGRHGGSNGNISGAKTPMTNYTINSMPSLPVFPPAFIVPGTHQKLDESSPVPGIDDVTVINTETAKMLDKDEHQNVLWYTVPPLDPIPLENRNGSLTHSVEYVLYKKSKGSQVITEKARSNELSREAKFENLVASLSDALIPP</sequence>
<name>RSC1_SCHPO</name>
<feature type="chain" id="PRO_0000211210" description="Chromatin structure-remodeling complex subunit rsc1">
    <location>
        <begin position="1"/>
        <end position="803"/>
    </location>
</feature>
<feature type="domain" description="Bromo 1" evidence="2">
    <location>
        <begin position="9"/>
        <end position="117"/>
    </location>
</feature>
<feature type="domain" description="Bromo 2" evidence="2">
    <location>
        <begin position="206"/>
        <end position="316"/>
    </location>
</feature>
<feature type="domain" description="BAH" evidence="3">
    <location>
        <begin position="351"/>
        <end position="469"/>
    </location>
</feature>
<feature type="region of interest" description="Disordered" evidence="4">
    <location>
        <begin position="128"/>
        <end position="160"/>
    </location>
</feature>
<feature type="region of interest" description="Disordered" evidence="4">
    <location>
        <begin position="174"/>
        <end position="206"/>
    </location>
</feature>
<feature type="region of interest" description="Disordered" evidence="4">
    <location>
        <begin position="512"/>
        <end position="616"/>
    </location>
</feature>
<feature type="compositionally biased region" description="Polar residues" evidence="4">
    <location>
        <begin position="128"/>
        <end position="154"/>
    </location>
</feature>
<feature type="compositionally biased region" description="Basic and acidic residues" evidence="4">
    <location>
        <begin position="178"/>
        <end position="197"/>
    </location>
</feature>
<feature type="compositionally biased region" description="Polar residues" evidence="4">
    <location>
        <begin position="512"/>
        <end position="525"/>
    </location>
</feature>
<feature type="compositionally biased region" description="Low complexity" evidence="4">
    <location>
        <begin position="526"/>
        <end position="539"/>
    </location>
</feature>
<feature type="compositionally biased region" description="Polar residues" evidence="4">
    <location>
        <begin position="540"/>
        <end position="553"/>
    </location>
</feature>
<feature type="compositionally biased region" description="Polar residues" evidence="4">
    <location>
        <begin position="605"/>
        <end position="615"/>
    </location>
</feature>
<feature type="modified residue" description="Phosphoserine" evidence="6">
    <location>
        <position position="168"/>
    </location>
</feature>
<feature type="modified residue" description="Phosphoserine" evidence="6">
    <location>
        <position position="331"/>
    </location>
</feature>
<feature type="modified residue" description="Phosphoserine" evidence="6">
    <location>
        <position position="334"/>
    </location>
</feature>
<keyword id="KW-0103">Bromodomain</keyword>
<keyword id="KW-0156">Chromatin regulator</keyword>
<keyword id="KW-0539">Nucleus</keyword>
<keyword id="KW-0597">Phosphoprotein</keyword>
<keyword id="KW-1185">Reference proteome</keyword>
<keyword id="KW-0677">Repeat</keyword>
<keyword id="KW-0804">Transcription</keyword>
<keyword id="KW-0805">Transcription regulation</keyword>
<gene>
    <name type="primary">rsc1</name>
    <name type="ORF">SPBC4B4.03</name>
</gene>